<sequence length="245" mass="27214">MGLIWLLLLSLLEPSWPTTGPGTRLRRDAGGRGGVYEHLGGAPRRRKLYCATKYHLQLHPSGRVNGSLENSAYSILEITAVEVGVVAIKGLFSGRYLAMNKRGRLYASDHYNAECEFVERIHELGYNTYASRLYRTGSSGPGAQRQPGAQRPWYVSVNGKGRPRRGFKTRRTQKSSLFLPRVLGHKDHEMVRLLQSSQPRAPGEGSQPRQRRQKKQSPGDHGKMETLSTRATPSTQLHTGGLAVA</sequence>
<reference key="1">
    <citation type="journal article" date="1990" name="Nature">
        <title>Subcellular fate of the int-2 oncoprotein is determined by choice of initiation codon.</title>
        <authorList>
            <person name="Acland P."/>
            <person name="Dixon M."/>
            <person name="Peters G."/>
            <person name="Dickson C."/>
        </authorList>
    </citation>
    <scope>NUCLEOTIDE SEQUENCE (ISOFORMS 1 AND 2)</scope>
    <scope>ALTERNATIVE INITIATION</scope>
    <scope>SUBCELLULAR LOCATION</scope>
    <scope>MUTAGENESIS OF ASN-65</scope>
</reference>
<reference key="2">
    <citation type="journal article" date="1986" name="EMBO J.">
        <title>Sequence, topography and protein coding potential of mouse int-2: a putative oncogene activated by mouse mammary tumour virus.</title>
        <authorList>
            <person name="Moore R."/>
            <person name="Casey G."/>
            <person name="Brookes S."/>
            <person name="Dixon M."/>
            <person name="Peters G."/>
            <person name="Dickson C."/>
        </authorList>
    </citation>
    <scope>NUCLEOTIDE SEQUENCE [GENOMIC DNA]</scope>
</reference>
<reference key="3">
    <citation type="journal article" date="1988" name="EMBO J.">
        <title>Multiple RNAs expressed from the int-2 gene in mouse embryonal carcinoma cell lines encode a protein with homology to fibroblast growth factors.</title>
        <authorList>
            <person name="Smith R."/>
            <person name="Peters G."/>
            <person name="Dickson C."/>
        </authorList>
    </citation>
    <scope>NUCLEOTIDE SEQUENCE [MRNA] OF 1-73 (ISOFORM 1)</scope>
</reference>
<reference key="4">
    <citation type="journal article" date="1990" name="J. Cell Sci. Suppl.">
        <title>Characterization of int-2: a member of the fibroblast growth factor family.</title>
        <authorList>
            <person name="Dickson C."/>
            <person name="Acland P."/>
            <person name="Smith R."/>
            <person name="Dixon M."/>
            <person name="Deed R."/>
            <person name="McAllan D."/>
            <person name="Walther W."/>
            <person name="Fuller-Pace F."/>
            <person name="Kiefer P."/>
            <person name="Peters G."/>
        </authorList>
    </citation>
    <scope>CHARACTERIZATION</scope>
</reference>
<dbReference type="EMBL" id="X52014">
    <property type="protein sequence ID" value="CAA36261.1"/>
    <property type="molecule type" value="mRNA"/>
</dbReference>
<dbReference type="EMBL" id="Y00848">
    <property type="protein sequence ID" value="CAA68767.1"/>
    <property type="status" value="ALT_INIT"/>
    <property type="molecule type" value="Genomic_DNA"/>
</dbReference>
<dbReference type="CCDS" id="CCDS22051.1">
    <molecule id="P05524-1"/>
</dbReference>
<dbReference type="PIR" id="A23930">
    <property type="entry name" value="TVMST2"/>
</dbReference>
<dbReference type="SMR" id="P05524"/>
<dbReference type="FunCoup" id="P05524">
    <property type="interactions" value="163"/>
</dbReference>
<dbReference type="STRING" id="10090.ENSMUSP00000101518"/>
<dbReference type="GlyCosmos" id="P05524">
    <property type="glycosylation" value="1 site, No reported glycans"/>
</dbReference>
<dbReference type="GlyGen" id="P05524">
    <property type="glycosylation" value="2 sites"/>
</dbReference>
<dbReference type="iPTMnet" id="P05524"/>
<dbReference type="PhosphoSitePlus" id="P05524"/>
<dbReference type="PaxDb" id="10090-ENSMUSP00000101518"/>
<dbReference type="AGR" id="MGI:95517"/>
<dbReference type="MGI" id="MGI:95517">
    <property type="gene designation" value="Fgf3"/>
</dbReference>
<dbReference type="eggNOG" id="KOG3885">
    <property type="taxonomic scope" value="Eukaryota"/>
</dbReference>
<dbReference type="InParanoid" id="P05524"/>
<dbReference type="PhylomeDB" id="P05524"/>
<dbReference type="Reactome" id="R-MMU-109704">
    <property type="pathway name" value="PI3K Cascade"/>
</dbReference>
<dbReference type="Reactome" id="R-MMU-1257604">
    <property type="pathway name" value="PIP3 activates AKT signaling"/>
</dbReference>
<dbReference type="Reactome" id="R-MMU-190370">
    <property type="pathway name" value="FGFR1b ligand binding and activation"/>
</dbReference>
<dbReference type="Reactome" id="R-MMU-190377">
    <property type="pathway name" value="FGFR2b ligand binding and activation"/>
</dbReference>
<dbReference type="Reactome" id="R-MMU-5654219">
    <property type="pathway name" value="Phospholipase C-mediated cascade: FGFR1"/>
</dbReference>
<dbReference type="Reactome" id="R-MMU-5654221">
    <property type="pathway name" value="Phospholipase C-mediated cascade, FGFR2"/>
</dbReference>
<dbReference type="Reactome" id="R-MMU-5654687">
    <property type="pathway name" value="Downstream signaling of activated FGFR1"/>
</dbReference>
<dbReference type="Reactome" id="R-MMU-5654688">
    <property type="pathway name" value="SHC-mediated cascade:FGFR1"/>
</dbReference>
<dbReference type="Reactome" id="R-MMU-5654689">
    <property type="pathway name" value="PI-3K cascade:FGFR1"/>
</dbReference>
<dbReference type="Reactome" id="R-MMU-5654693">
    <property type="pathway name" value="FRS-mediated FGFR1 signaling"/>
</dbReference>
<dbReference type="Reactome" id="R-MMU-5654695">
    <property type="pathway name" value="PI-3K cascade:FGFR2"/>
</dbReference>
<dbReference type="Reactome" id="R-MMU-5654699">
    <property type="pathway name" value="SHC-mediated cascade:FGFR2"/>
</dbReference>
<dbReference type="Reactome" id="R-MMU-5654700">
    <property type="pathway name" value="FRS-mediated FGFR2 signaling"/>
</dbReference>
<dbReference type="Reactome" id="R-MMU-5654726">
    <property type="pathway name" value="Negative regulation of FGFR1 signaling"/>
</dbReference>
<dbReference type="Reactome" id="R-MMU-5654727">
    <property type="pathway name" value="Negative regulation of FGFR2 signaling"/>
</dbReference>
<dbReference type="Reactome" id="R-MMU-5658623">
    <property type="pathway name" value="FGFRL1 modulation of FGFR1 signaling"/>
</dbReference>
<dbReference type="Reactome" id="R-MMU-5673001">
    <property type="pathway name" value="RAF/MAP kinase cascade"/>
</dbReference>
<dbReference type="Reactome" id="R-MMU-6811558">
    <property type="pathway name" value="PI5P, PP2A and IER3 Regulate PI3K/AKT Signaling"/>
</dbReference>
<dbReference type="PRO" id="PR:P05524"/>
<dbReference type="Proteomes" id="UP000000589">
    <property type="component" value="Unplaced"/>
</dbReference>
<dbReference type="RNAct" id="P05524">
    <property type="molecule type" value="protein"/>
</dbReference>
<dbReference type="GO" id="GO:0005737">
    <property type="term" value="C:cytoplasm"/>
    <property type="evidence" value="ECO:0000314"/>
    <property type="project" value="MGI"/>
</dbReference>
<dbReference type="GO" id="GO:0005783">
    <property type="term" value="C:endoplasmic reticulum"/>
    <property type="evidence" value="ECO:0007669"/>
    <property type="project" value="UniProtKB-SubCell"/>
</dbReference>
<dbReference type="GO" id="GO:0005794">
    <property type="term" value="C:Golgi apparatus"/>
    <property type="evidence" value="ECO:0000314"/>
    <property type="project" value="MGI"/>
</dbReference>
<dbReference type="GO" id="GO:0005634">
    <property type="term" value="C:nucleus"/>
    <property type="evidence" value="ECO:0007669"/>
    <property type="project" value="UniProtKB-SubCell"/>
</dbReference>
<dbReference type="GO" id="GO:0008083">
    <property type="term" value="F:growth factor activity"/>
    <property type="evidence" value="ECO:0007669"/>
    <property type="project" value="UniProtKB-KW"/>
</dbReference>
<dbReference type="GO" id="GO:0030154">
    <property type="term" value="P:cell differentiation"/>
    <property type="evidence" value="ECO:0007669"/>
    <property type="project" value="UniProtKB-KW"/>
</dbReference>
<dbReference type="GO" id="GO:0008543">
    <property type="term" value="P:fibroblast growth factor receptor signaling pathway"/>
    <property type="evidence" value="ECO:0000314"/>
    <property type="project" value="MGI"/>
</dbReference>
<dbReference type="GO" id="GO:0001759">
    <property type="term" value="P:organ induction"/>
    <property type="evidence" value="ECO:0000316"/>
    <property type="project" value="MGI"/>
</dbReference>
<dbReference type="GO" id="GO:0030916">
    <property type="term" value="P:otic vesicle formation"/>
    <property type="evidence" value="ECO:0000316"/>
    <property type="project" value="MGI"/>
</dbReference>
<dbReference type="GO" id="GO:0051781">
    <property type="term" value="P:positive regulation of cell division"/>
    <property type="evidence" value="ECO:0007669"/>
    <property type="project" value="UniProtKB-KW"/>
</dbReference>
<dbReference type="GO" id="GO:0008284">
    <property type="term" value="P:positive regulation of cell population proliferation"/>
    <property type="evidence" value="ECO:0000314"/>
    <property type="project" value="MGI"/>
</dbReference>
<dbReference type="GO" id="GO:0036342">
    <property type="term" value="P:post-anal tail morphogenesis"/>
    <property type="evidence" value="ECO:0000315"/>
    <property type="project" value="MGI"/>
</dbReference>
<dbReference type="GO" id="GO:0048752">
    <property type="term" value="P:semicircular canal morphogenesis"/>
    <property type="evidence" value="ECO:0000316"/>
    <property type="project" value="MGI"/>
</dbReference>
<dbReference type="GO" id="GO:0048538">
    <property type="term" value="P:thymus development"/>
    <property type="evidence" value="ECO:0000315"/>
    <property type="project" value="MGI"/>
</dbReference>
<dbReference type="FunFam" id="2.80.10.50:FF:000060">
    <property type="entry name" value="Fibroblast growth factor"/>
    <property type="match status" value="1"/>
</dbReference>
<dbReference type="Gene3D" id="2.80.10.50">
    <property type="match status" value="1"/>
</dbReference>
<dbReference type="InterPro" id="IPR002209">
    <property type="entry name" value="Fibroblast_GF_fam"/>
</dbReference>
<dbReference type="InterPro" id="IPR008996">
    <property type="entry name" value="IL1/FGF"/>
</dbReference>
<dbReference type="PANTHER" id="PTHR11486">
    <property type="entry name" value="FIBROBLAST GROWTH FACTOR"/>
    <property type="match status" value="1"/>
</dbReference>
<dbReference type="Pfam" id="PF00167">
    <property type="entry name" value="FGF"/>
    <property type="match status" value="1"/>
</dbReference>
<dbReference type="PRINTS" id="PR00263">
    <property type="entry name" value="HBGFFGF"/>
</dbReference>
<dbReference type="PRINTS" id="PR00262">
    <property type="entry name" value="IL1HBGF"/>
</dbReference>
<dbReference type="SMART" id="SM00442">
    <property type="entry name" value="FGF"/>
    <property type="match status" value="1"/>
</dbReference>
<dbReference type="SUPFAM" id="SSF50353">
    <property type="entry name" value="Cytokine"/>
    <property type="match status" value="1"/>
</dbReference>
<dbReference type="PROSITE" id="PS00247">
    <property type="entry name" value="HBGF_FGF"/>
    <property type="match status" value="1"/>
</dbReference>
<feature type="signal peptide" evidence="2">
    <location>
        <begin position="1"/>
        <end position="17"/>
    </location>
</feature>
<feature type="chain" id="PRO_0000238784" description="Fibroblast growth factor 3">
    <location>
        <begin position="18"/>
        <end position="245"/>
    </location>
</feature>
<feature type="region of interest" description="Disordered" evidence="3">
    <location>
        <begin position="137"/>
        <end position="181"/>
    </location>
</feature>
<feature type="region of interest" description="Disordered" evidence="3">
    <location>
        <begin position="195"/>
        <end position="245"/>
    </location>
</feature>
<feature type="compositionally biased region" description="Basic residues" evidence="3">
    <location>
        <begin position="161"/>
        <end position="173"/>
    </location>
</feature>
<feature type="compositionally biased region" description="Polar residues" evidence="3">
    <location>
        <begin position="226"/>
        <end position="238"/>
    </location>
</feature>
<feature type="glycosylation site" description="N-linked (GlcNAc...) asparagine">
    <location>
        <position position="65"/>
    </location>
</feature>
<feature type="splice variant" id="VSP_018727" description="In isoform 1." evidence="5">
    <original>M</original>
    <variation>MARGRVLPAPRLRETRAGAAAAAGGRDAG</variation>
    <location>
        <position position="1"/>
    </location>
</feature>
<feature type="mutagenesis site" description="Not glycosylated." evidence="4">
    <original>N</original>
    <variation>Q</variation>
    <location>
        <position position="65"/>
    </location>
</feature>
<accession>P05524</accession>
<accession>Q61736</accession>
<protein>
    <recommendedName>
        <fullName>Fibroblast growth factor 3</fullName>
        <shortName>FGF-3</shortName>
    </recommendedName>
    <alternativeName>
        <fullName>Heparin-binding growth factor 3</fullName>
        <shortName>HBGF-3</shortName>
    </alternativeName>
    <alternativeName>
        <fullName>Proto-oncogene Int-2</fullName>
    </alternativeName>
</protein>
<evidence type="ECO:0000250" key="1"/>
<evidence type="ECO:0000255" key="2"/>
<evidence type="ECO:0000256" key="3">
    <source>
        <dbReference type="SAM" id="MobiDB-lite"/>
    </source>
</evidence>
<evidence type="ECO:0000269" key="4">
    <source>
    </source>
</evidence>
<evidence type="ECO:0000303" key="5">
    <source>
    </source>
</evidence>
<evidence type="ECO:0000305" key="6"/>
<gene>
    <name type="primary">Fgf3</name>
    <name type="synonym">Fgf-3</name>
    <name type="synonym">Int-2</name>
</gene>
<name>FGF3_MOUSE</name>
<keyword id="KW-0024">Alternative initiation</keyword>
<keyword id="KW-0217">Developmental protein</keyword>
<keyword id="KW-0221">Differentiation</keyword>
<keyword id="KW-0256">Endoplasmic reticulum</keyword>
<keyword id="KW-0325">Glycoprotein</keyword>
<keyword id="KW-0333">Golgi apparatus</keyword>
<keyword id="KW-0339">Growth factor</keyword>
<keyword id="KW-0497">Mitogen</keyword>
<keyword id="KW-0539">Nucleus</keyword>
<keyword id="KW-0656">Proto-oncogene</keyword>
<keyword id="KW-1185">Reference proteome</keyword>
<keyword id="KW-0732">Signal</keyword>
<proteinExistence type="evidence at protein level"/>
<organism>
    <name type="scientific">Mus musculus</name>
    <name type="common">Mouse</name>
    <dbReference type="NCBI Taxonomy" id="10090"/>
    <lineage>
        <taxon>Eukaryota</taxon>
        <taxon>Metazoa</taxon>
        <taxon>Chordata</taxon>
        <taxon>Craniata</taxon>
        <taxon>Vertebrata</taxon>
        <taxon>Euteleostomi</taxon>
        <taxon>Mammalia</taxon>
        <taxon>Eutheria</taxon>
        <taxon>Euarchontoglires</taxon>
        <taxon>Glires</taxon>
        <taxon>Rodentia</taxon>
        <taxon>Myomorpha</taxon>
        <taxon>Muroidea</taxon>
        <taxon>Muridae</taxon>
        <taxon>Murinae</taxon>
        <taxon>Mus</taxon>
        <taxon>Mus</taxon>
    </lineage>
</organism>
<comment type="function">
    <text evidence="1">Plays an important role in the regulation of embryonic development, cell proliferation, and cell differentiation. Required for normal ear development (By similarity).</text>
</comment>
<comment type="subunit">
    <text evidence="1">Interacts with FGFR1 and FGFR2. Affinity between fibroblast growth factors (FGFs) and their receptors is increased by heparan sulfate glycosaminoglycans that function as coreceptors (By similarity).</text>
</comment>
<comment type="subcellular location">
    <molecule>Isoform 1</molecule>
    <subcellularLocation>
        <location>Nucleus</location>
    </subcellularLocation>
</comment>
<comment type="subcellular location">
    <molecule>Isoform 2</molecule>
    <subcellularLocation>
        <location>Endoplasmic reticulum</location>
    </subcellularLocation>
    <subcellularLocation>
        <location>Golgi apparatus</location>
    </subcellularLocation>
</comment>
<comment type="alternative products">
    <event type="alternative initiation"/>
    <isoform>
        <id>P05524-1</id>
        <name>2</name>
        <sequence type="displayed"/>
    </isoform>
    <isoform>
        <id>P05524-2</id>
        <name>1</name>
        <sequence type="described" ref="VSP_018727"/>
    </isoform>
</comment>
<comment type="induction">
    <text>By integration of mouse mammary tumor virus.</text>
</comment>
<comment type="PTM">
    <text>Glycosylated.</text>
</comment>
<comment type="miscellaneous">
    <molecule>Isoform 1</molecule>
    <text evidence="6">Starts at an alternative CUG codon.</text>
</comment>
<comment type="similarity">
    <text evidence="6">Belongs to the heparin-binding growth factors family.</text>
</comment>
<comment type="sequence caution" evidence="6">
    <conflict type="erroneous initiation">
        <sequence resource="EMBL-CDS" id="CAA68767"/>
    </conflict>
</comment>